<comment type="function">
    <text evidence="1">Antitoxin component of a type II toxin-antitoxin (TA) system.</text>
</comment>
<accession>P9WJ08</accession>
<accession>L0T617</accession>
<accession>O07225</accession>
<accession>Q7DA27</accession>
<protein>
    <recommendedName>
        <fullName>Antitoxin MT0312</fullName>
    </recommendedName>
</protein>
<sequence>MTKEKISVTVDAAVLAAIDADARAAGLNRSEMIEQALRNEHLRVALRDYTAKTVPALDIDAYAQRVYQANRAAGS</sequence>
<dbReference type="EMBL" id="AE000516">
    <property type="protein sequence ID" value="AAK44535.1"/>
    <property type="molecule type" value="Genomic_DNA"/>
</dbReference>
<dbReference type="PIR" id="C70523">
    <property type="entry name" value="C70523"/>
</dbReference>
<dbReference type="RefSeq" id="WP_003401555.1">
    <property type="nucleotide sequence ID" value="NZ_KK341227.1"/>
</dbReference>
<dbReference type="SMR" id="P9WJ08"/>
<dbReference type="KEGG" id="mtc:MT0312"/>
<dbReference type="PATRIC" id="fig|83331.31.peg.334"/>
<dbReference type="HOGENOM" id="CLU_2667192_0_0_11"/>
<dbReference type="Proteomes" id="UP000001020">
    <property type="component" value="Chromosome"/>
</dbReference>
<dbReference type="GO" id="GO:0006355">
    <property type="term" value="P:regulation of DNA-templated transcription"/>
    <property type="evidence" value="ECO:0007669"/>
    <property type="project" value="InterPro"/>
</dbReference>
<dbReference type="InterPro" id="IPR002145">
    <property type="entry name" value="CopG"/>
</dbReference>
<dbReference type="Pfam" id="PF01402">
    <property type="entry name" value="RHH_1"/>
    <property type="match status" value="1"/>
</dbReference>
<gene>
    <name type="ordered locus">MT0312</name>
</gene>
<organism>
    <name type="scientific">Mycobacterium tuberculosis (strain CDC 1551 / Oshkosh)</name>
    <dbReference type="NCBI Taxonomy" id="83331"/>
    <lineage>
        <taxon>Bacteria</taxon>
        <taxon>Bacillati</taxon>
        <taxon>Actinomycetota</taxon>
        <taxon>Actinomycetes</taxon>
        <taxon>Mycobacteriales</taxon>
        <taxon>Mycobacteriaceae</taxon>
        <taxon>Mycobacterium</taxon>
        <taxon>Mycobacterium tuberculosis complex</taxon>
    </lineage>
</organism>
<name>Y298_MYCTO</name>
<reference key="1">
    <citation type="journal article" date="2002" name="J. Bacteriol.">
        <title>Whole-genome comparison of Mycobacterium tuberculosis clinical and laboratory strains.</title>
        <authorList>
            <person name="Fleischmann R.D."/>
            <person name="Alland D."/>
            <person name="Eisen J.A."/>
            <person name="Carpenter L."/>
            <person name="White O."/>
            <person name="Peterson J.D."/>
            <person name="DeBoy R.T."/>
            <person name="Dodson R.J."/>
            <person name="Gwinn M.L."/>
            <person name="Haft D.H."/>
            <person name="Hickey E.K."/>
            <person name="Kolonay J.F."/>
            <person name="Nelson W.C."/>
            <person name="Umayam L.A."/>
            <person name="Ermolaeva M.D."/>
            <person name="Salzberg S.L."/>
            <person name="Delcher A."/>
            <person name="Utterback T.R."/>
            <person name="Weidman J.F."/>
            <person name="Khouri H.M."/>
            <person name="Gill J."/>
            <person name="Mikula A."/>
            <person name="Bishai W."/>
            <person name="Jacobs W.R. Jr."/>
            <person name="Venter J.C."/>
            <person name="Fraser C.M."/>
        </authorList>
    </citation>
    <scope>NUCLEOTIDE SEQUENCE [LARGE SCALE GENOMIC DNA]</scope>
    <source>
        <strain>CDC 1551 / Oshkosh</strain>
    </source>
</reference>
<feature type="chain" id="PRO_0000427912" description="Antitoxin MT0312">
    <location>
        <begin position="1"/>
        <end position="75"/>
    </location>
</feature>
<evidence type="ECO:0000250" key="1"/>
<proteinExistence type="inferred from homology"/>
<keyword id="KW-1185">Reference proteome</keyword>
<keyword id="KW-1277">Toxin-antitoxin system</keyword>